<feature type="chain" id="PRO_0000150193" description="Phosphoserine aminotransferase">
    <location>
        <begin position="1"/>
        <end position="368"/>
    </location>
</feature>
<feature type="binding site" evidence="1">
    <location>
        <position position="42"/>
    </location>
    <ligand>
        <name>L-glutamate</name>
        <dbReference type="ChEBI" id="CHEBI:29985"/>
    </ligand>
</feature>
<feature type="binding site" evidence="1">
    <location>
        <begin position="76"/>
        <end position="77"/>
    </location>
    <ligand>
        <name>pyridoxal 5'-phosphate</name>
        <dbReference type="ChEBI" id="CHEBI:597326"/>
    </ligand>
</feature>
<feature type="binding site" evidence="1">
    <location>
        <position position="102"/>
    </location>
    <ligand>
        <name>pyridoxal 5'-phosphate</name>
        <dbReference type="ChEBI" id="CHEBI:597326"/>
    </ligand>
</feature>
<feature type="binding site" evidence="1">
    <location>
        <position position="152"/>
    </location>
    <ligand>
        <name>pyridoxal 5'-phosphate</name>
        <dbReference type="ChEBI" id="CHEBI:597326"/>
    </ligand>
</feature>
<feature type="binding site" evidence="1">
    <location>
        <position position="179"/>
    </location>
    <ligand>
        <name>pyridoxal 5'-phosphate</name>
        <dbReference type="ChEBI" id="CHEBI:597326"/>
    </ligand>
</feature>
<feature type="binding site" evidence="1">
    <location>
        <position position="202"/>
    </location>
    <ligand>
        <name>pyridoxal 5'-phosphate</name>
        <dbReference type="ChEBI" id="CHEBI:597326"/>
    </ligand>
</feature>
<feature type="binding site" evidence="1">
    <location>
        <begin position="245"/>
        <end position="246"/>
    </location>
    <ligand>
        <name>pyridoxal 5'-phosphate</name>
        <dbReference type="ChEBI" id="CHEBI:597326"/>
    </ligand>
</feature>
<feature type="modified residue" description="N6-(pyridoxal phosphate)lysine" evidence="1">
    <location>
        <position position="203"/>
    </location>
</feature>
<proteinExistence type="inferred from homology"/>
<reference key="1">
    <citation type="journal article" date="2003" name="J. Bacteriol.">
        <title>Complete genome sequence of the ammonia-oxidizing bacterium and obligate chemolithoautotroph Nitrosomonas europaea.</title>
        <authorList>
            <person name="Chain P."/>
            <person name="Lamerdin J.E."/>
            <person name="Larimer F.W."/>
            <person name="Regala W."/>
            <person name="Lao V."/>
            <person name="Land M.L."/>
            <person name="Hauser L."/>
            <person name="Hooper A.B."/>
            <person name="Klotz M.G."/>
            <person name="Norton J."/>
            <person name="Sayavedra-Soto L.A."/>
            <person name="Arciero D.M."/>
            <person name="Hommes N.G."/>
            <person name="Whittaker M.M."/>
            <person name="Arp D.J."/>
        </authorList>
    </citation>
    <scope>NUCLEOTIDE SEQUENCE [LARGE SCALE GENOMIC DNA]</scope>
    <source>
        <strain>ATCC 19718 / CIP 103999 / KCTC 2705 / NBRC 14298</strain>
    </source>
</reference>
<keyword id="KW-0028">Amino-acid biosynthesis</keyword>
<keyword id="KW-0032">Aminotransferase</keyword>
<keyword id="KW-0963">Cytoplasm</keyword>
<keyword id="KW-0663">Pyridoxal phosphate</keyword>
<keyword id="KW-0664">Pyridoxine biosynthesis</keyword>
<keyword id="KW-1185">Reference proteome</keyword>
<keyword id="KW-0718">Serine biosynthesis</keyword>
<keyword id="KW-0808">Transferase</keyword>
<gene>
    <name evidence="1" type="primary">serC</name>
    <name type="ordered locus">NE0333</name>
</gene>
<comment type="function">
    <text evidence="1">Catalyzes the reversible conversion of 3-phosphohydroxypyruvate to phosphoserine and of 3-hydroxy-2-oxo-4-phosphonooxybutanoate to phosphohydroxythreonine.</text>
</comment>
<comment type="catalytic activity">
    <reaction evidence="1">
        <text>O-phospho-L-serine + 2-oxoglutarate = 3-phosphooxypyruvate + L-glutamate</text>
        <dbReference type="Rhea" id="RHEA:14329"/>
        <dbReference type="ChEBI" id="CHEBI:16810"/>
        <dbReference type="ChEBI" id="CHEBI:18110"/>
        <dbReference type="ChEBI" id="CHEBI:29985"/>
        <dbReference type="ChEBI" id="CHEBI:57524"/>
        <dbReference type="EC" id="2.6.1.52"/>
    </reaction>
</comment>
<comment type="catalytic activity">
    <reaction evidence="1">
        <text>4-(phosphooxy)-L-threonine + 2-oxoglutarate = (R)-3-hydroxy-2-oxo-4-phosphooxybutanoate + L-glutamate</text>
        <dbReference type="Rhea" id="RHEA:16573"/>
        <dbReference type="ChEBI" id="CHEBI:16810"/>
        <dbReference type="ChEBI" id="CHEBI:29985"/>
        <dbReference type="ChEBI" id="CHEBI:58452"/>
        <dbReference type="ChEBI" id="CHEBI:58538"/>
        <dbReference type="EC" id="2.6.1.52"/>
    </reaction>
</comment>
<comment type="cofactor">
    <cofactor evidence="1">
        <name>pyridoxal 5'-phosphate</name>
        <dbReference type="ChEBI" id="CHEBI:597326"/>
    </cofactor>
    <text evidence="1">Binds 1 pyridoxal phosphate per subunit.</text>
</comment>
<comment type="pathway">
    <text evidence="1">Amino-acid biosynthesis; L-serine biosynthesis; L-serine from 3-phospho-D-glycerate: step 2/3.</text>
</comment>
<comment type="pathway">
    <text evidence="1">Cofactor biosynthesis; pyridoxine 5'-phosphate biosynthesis; pyridoxine 5'-phosphate from D-erythrose 4-phosphate: step 3/5.</text>
</comment>
<comment type="subunit">
    <text evidence="1">Homodimer.</text>
</comment>
<comment type="subcellular location">
    <subcellularLocation>
        <location evidence="1">Cytoplasm</location>
    </subcellularLocation>
</comment>
<comment type="similarity">
    <text evidence="1">Belongs to the class-V pyridoxal-phosphate-dependent aminotransferase family. SerC subfamily.</text>
</comment>
<sequence>MRKIYNFSAGPAVLPEEVLEQAREEMLDWHGSGMSVMEMSHRGKEFMSIADETESALRELAGIPDHYKVLFLQGGASSQFAMVPMNLLGKKGKADYVNTGQWSAKAISEAKNYGSVQIAASSESDGFNSVPPLAQWHISPDAAYVHYASNETIGGVEFQWTPDLSAVAGDNKNIPLVADMSSNFLSRPFDVSKFGLIYAGAQKNVGPAGLVVVIVREDLLDIPPLAGTPAMFRYKTHADNASMYNTPPTYAIYIMGLVMEWLKKQGGLTAIEQRNIAKAKLIYDLIDVSSFYHCPVNQADRSRMNVPFTLSDPGLDDAFLKQAQAHGLIQLKGHRSVGGMRASIYNAMPLEGVQTLVTFMREFEKNHA</sequence>
<organism>
    <name type="scientific">Nitrosomonas europaea (strain ATCC 19718 / CIP 103999 / KCTC 2705 / NBRC 14298)</name>
    <dbReference type="NCBI Taxonomy" id="228410"/>
    <lineage>
        <taxon>Bacteria</taxon>
        <taxon>Pseudomonadati</taxon>
        <taxon>Pseudomonadota</taxon>
        <taxon>Betaproteobacteria</taxon>
        <taxon>Nitrosomonadales</taxon>
        <taxon>Nitrosomonadaceae</taxon>
        <taxon>Nitrosomonas</taxon>
    </lineage>
</organism>
<dbReference type="EC" id="2.6.1.52" evidence="1"/>
<dbReference type="EMBL" id="AL954747">
    <property type="protein sequence ID" value="CAD84244.1"/>
    <property type="molecule type" value="Genomic_DNA"/>
</dbReference>
<dbReference type="RefSeq" id="WP_011110968.1">
    <property type="nucleotide sequence ID" value="NC_004757.1"/>
</dbReference>
<dbReference type="SMR" id="Q820S0"/>
<dbReference type="STRING" id="228410.NE0333"/>
<dbReference type="GeneID" id="87103540"/>
<dbReference type="KEGG" id="neu:NE0333"/>
<dbReference type="eggNOG" id="COG1932">
    <property type="taxonomic scope" value="Bacteria"/>
</dbReference>
<dbReference type="HOGENOM" id="CLU_034866_0_2_4"/>
<dbReference type="OrthoDB" id="9809412at2"/>
<dbReference type="PhylomeDB" id="Q820S0"/>
<dbReference type="UniPathway" id="UPA00135">
    <property type="reaction ID" value="UER00197"/>
</dbReference>
<dbReference type="UniPathway" id="UPA00244">
    <property type="reaction ID" value="UER00311"/>
</dbReference>
<dbReference type="Proteomes" id="UP000001416">
    <property type="component" value="Chromosome"/>
</dbReference>
<dbReference type="GO" id="GO:0005737">
    <property type="term" value="C:cytoplasm"/>
    <property type="evidence" value="ECO:0007669"/>
    <property type="project" value="UniProtKB-SubCell"/>
</dbReference>
<dbReference type="GO" id="GO:0004648">
    <property type="term" value="F:O-phospho-L-serine:2-oxoglutarate aminotransferase activity"/>
    <property type="evidence" value="ECO:0007669"/>
    <property type="project" value="UniProtKB-UniRule"/>
</dbReference>
<dbReference type="GO" id="GO:0030170">
    <property type="term" value="F:pyridoxal phosphate binding"/>
    <property type="evidence" value="ECO:0007669"/>
    <property type="project" value="UniProtKB-UniRule"/>
</dbReference>
<dbReference type="GO" id="GO:0006564">
    <property type="term" value="P:L-serine biosynthetic process"/>
    <property type="evidence" value="ECO:0007669"/>
    <property type="project" value="UniProtKB-UniRule"/>
</dbReference>
<dbReference type="GO" id="GO:0008615">
    <property type="term" value="P:pyridoxine biosynthetic process"/>
    <property type="evidence" value="ECO:0007669"/>
    <property type="project" value="UniProtKB-UniRule"/>
</dbReference>
<dbReference type="CDD" id="cd00611">
    <property type="entry name" value="PSAT_like"/>
    <property type="match status" value="1"/>
</dbReference>
<dbReference type="FunFam" id="3.40.640.10:FF:000010">
    <property type="entry name" value="Phosphoserine aminotransferase"/>
    <property type="match status" value="1"/>
</dbReference>
<dbReference type="FunFam" id="3.90.1150.10:FF:000006">
    <property type="entry name" value="Phosphoserine aminotransferase"/>
    <property type="match status" value="1"/>
</dbReference>
<dbReference type="Gene3D" id="3.90.1150.10">
    <property type="entry name" value="Aspartate Aminotransferase, domain 1"/>
    <property type="match status" value="1"/>
</dbReference>
<dbReference type="Gene3D" id="3.40.640.10">
    <property type="entry name" value="Type I PLP-dependent aspartate aminotransferase-like (Major domain)"/>
    <property type="match status" value="1"/>
</dbReference>
<dbReference type="HAMAP" id="MF_00160">
    <property type="entry name" value="SerC_aminotrans_5"/>
    <property type="match status" value="1"/>
</dbReference>
<dbReference type="InterPro" id="IPR000192">
    <property type="entry name" value="Aminotrans_V_dom"/>
</dbReference>
<dbReference type="InterPro" id="IPR022278">
    <property type="entry name" value="Pser_aminoTfrase"/>
</dbReference>
<dbReference type="InterPro" id="IPR015424">
    <property type="entry name" value="PyrdxlP-dep_Trfase"/>
</dbReference>
<dbReference type="InterPro" id="IPR015421">
    <property type="entry name" value="PyrdxlP-dep_Trfase_major"/>
</dbReference>
<dbReference type="InterPro" id="IPR015422">
    <property type="entry name" value="PyrdxlP-dep_Trfase_small"/>
</dbReference>
<dbReference type="NCBIfam" id="NF003764">
    <property type="entry name" value="PRK05355.1"/>
    <property type="match status" value="1"/>
</dbReference>
<dbReference type="NCBIfam" id="TIGR01364">
    <property type="entry name" value="serC_1"/>
    <property type="match status" value="1"/>
</dbReference>
<dbReference type="PANTHER" id="PTHR43247">
    <property type="entry name" value="PHOSPHOSERINE AMINOTRANSFERASE"/>
    <property type="match status" value="1"/>
</dbReference>
<dbReference type="PANTHER" id="PTHR43247:SF1">
    <property type="entry name" value="PHOSPHOSERINE AMINOTRANSFERASE"/>
    <property type="match status" value="1"/>
</dbReference>
<dbReference type="Pfam" id="PF00266">
    <property type="entry name" value="Aminotran_5"/>
    <property type="match status" value="1"/>
</dbReference>
<dbReference type="PIRSF" id="PIRSF000525">
    <property type="entry name" value="SerC"/>
    <property type="match status" value="1"/>
</dbReference>
<dbReference type="SUPFAM" id="SSF53383">
    <property type="entry name" value="PLP-dependent transferases"/>
    <property type="match status" value="1"/>
</dbReference>
<protein>
    <recommendedName>
        <fullName evidence="1">Phosphoserine aminotransferase</fullName>
        <ecNumber evidence="1">2.6.1.52</ecNumber>
    </recommendedName>
    <alternativeName>
        <fullName evidence="1">Phosphohydroxythreonine aminotransferase</fullName>
        <shortName evidence="1">PSAT</shortName>
    </alternativeName>
</protein>
<evidence type="ECO:0000255" key="1">
    <source>
        <dbReference type="HAMAP-Rule" id="MF_00160"/>
    </source>
</evidence>
<accession>Q820S0</accession>
<name>SERC_NITEU</name>